<protein>
    <recommendedName>
        <fullName>DnaJ homolog subfamily C member 22</fullName>
    </recommendedName>
</protein>
<evidence type="ECO:0000255" key="1"/>
<evidence type="ECO:0000255" key="2">
    <source>
        <dbReference type="PROSITE-ProRule" id="PRU00286"/>
    </source>
</evidence>
<evidence type="ECO:0000305" key="3"/>
<sequence>MAKGLLVTYALWAVGGPAGLHHLYLGRDSHALLWMLTLGGGGLGWLWEFWKLPSFVAQANRAQGQRQSPRGVTPPLSPIRFAAQVIVGIYFGLVALISLSSMVNFYIVALPLAVGLGVLLVAAVGNQTSDFKNTLGAAFLTSPIFYGRPIAILPISVAASITAQKRRRYKALVASEPLSVRLYRLGLAYLAFTGPLAYSALCNTAATLSYVAETFGSFLNWFSFFPLLGRLMEFVLLLPYRIWRLLMGETGFNSSYFQEWAKLYEFVHSFQDEKRQLAYQVLGLSEGATNEEIHRSYRELVKVWHPDHNLDQTEEAQRHFLEIQAAYEVLSQPRKPRGSRR</sequence>
<proteinExistence type="evidence at transcript level"/>
<dbReference type="EMBL" id="CR858714">
    <property type="protein sequence ID" value="CAH90923.1"/>
    <property type="molecule type" value="mRNA"/>
</dbReference>
<dbReference type="RefSeq" id="NP_001127351.1">
    <property type="nucleotide sequence ID" value="NM_001133879.1"/>
</dbReference>
<dbReference type="SMR" id="Q5RBD7"/>
<dbReference type="FunCoup" id="Q5RBD7">
    <property type="interactions" value="124"/>
</dbReference>
<dbReference type="STRING" id="9601.ENSPPYP00000005121"/>
<dbReference type="GeneID" id="100174415"/>
<dbReference type="KEGG" id="pon:100174415"/>
<dbReference type="CTD" id="79962"/>
<dbReference type="eggNOG" id="KOG0714">
    <property type="taxonomic scope" value="Eukaryota"/>
</dbReference>
<dbReference type="InParanoid" id="Q5RBD7"/>
<dbReference type="OrthoDB" id="10262359at2759"/>
<dbReference type="Proteomes" id="UP000001595">
    <property type="component" value="Unplaced"/>
</dbReference>
<dbReference type="GO" id="GO:0016020">
    <property type="term" value="C:membrane"/>
    <property type="evidence" value="ECO:0007669"/>
    <property type="project" value="UniProtKB-SubCell"/>
</dbReference>
<dbReference type="CDD" id="cd06257">
    <property type="entry name" value="DnaJ"/>
    <property type="match status" value="1"/>
</dbReference>
<dbReference type="Gene3D" id="1.10.287.110">
    <property type="entry name" value="DnaJ domain"/>
    <property type="match status" value="1"/>
</dbReference>
<dbReference type="InterPro" id="IPR001623">
    <property type="entry name" value="DnaJ_domain"/>
</dbReference>
<dbReference type="InterPro" id="IPR036869">
    <property type="entry name" value="J_dom_sf"/>
</dbReference>
<dbReference type="InterPro" id="IPR007829">
    <property type="entry name" value="TM2"/>
</dbReference>
<dbReference type="PANTHER" id="PTHR44733">
    <property type="entry name" value="DNAJ HOMOLOG SUBFAMILY C MEMBER 22"/>
    <property type="match status" value="1"/>
</dbReference>
<dbReference type="PANTHER" id="PTHR44733:SF1">
    <property type="entry name" value="DNAJ HOMOLOG SUBFAMILY C MEMBER 22"/>
    <property type="match status" value="1"/>
</dbReference>
<dbReference type="Pfam" id="PF00226">
    <property type="entry name" value="DnaJ"/>
    <property type="match status" value="1"/>
</dbReference>
<dbReference type="Pfam" id="PF05154">
    <property type="entry name" value="TM2"/>
    <property type="match status" value="1"/>
</dbReference>
<dbReference type="PRINTS" id="PR00625">
    <property type="entry name" value="JDOMAIN"/>
</dbReference>
<dbReference type="SMART" id="SM00271">
    <property type="entry name" value="DnaJ"/>
    <property type="match status" value="1"/>
</dbReference>
<dbReference type="SUPFAM" id="SSF46565">
    <property type="entry name" value="Chaperone J-domain"/>
    <property type="match status" value="1"/>
</dbReference>
<dbReference type="PROSITE" id="PS50076">
    <property type="entry name" value="DNAJ_2"/>
    <property type="match status" value="1"/>
</dbReference>
<reference key="1">
    <citation type="submission" date="2004-11" db="EMBL/GenBank/DDBJ databases">
        <authorList>
            <consortium name="The German cDNA consortium"/>
        </authorList>
    </citation>
    <scope>NUCLEOTIDE SEQUENCE [LARGE SCALE MRNA]</scope>
    <source>
        <tissue>Kidney</tissue>
    </source>
</reference>
<gene>
    <name type="primary">DNAJC22</name>
</gene>
<keyword id="KW-0143">Chaperone</keyword>
<keyword id="KW-0472">Membrane</keyword>
<keyword id="KW-1185">Reference proteome</keyword>
<keyword id="KW-0812">Transmembrane</keyword>
<keyword id="KW-1133">Transmembrane helix</keyword>
<comment type="function">
    <text>May function as a co-chaperone.</text>
</comment>
<comment type="subcellular location">
    <subcellularLocation>
        <location evidence="3">Membrane</location>
        <topology evidence="3">Multi-pass membrane protein</topology>
    </subcellularLocation>
</comment>
<accession>Q5RBD7</accession>
<name>DJC22_PONAB</name>
<organism>
    <name type="scientific">Pongo abelii</name>
    <name type="common">Sumatran orangutan</name>
    <name type="synonym">Pongo pygmaeus abelii</name>
    <dbReference type="NCBI Taxonomy" id="9601"/>
    <lineage>
        <taxon>Eukaryota</taxon>
        <taxon>Metazoa</taxon>
        <taxon>Chordata</taxon>
        <taxon>Craniata</taxon>
        <taxon>Vertebrata</taxon>
        <taxon>Euteleostomi</taxon>
        <taxon>Mammalia</taxon>
        <taxon>Eutheria</taxon>
        <taxon>Euarchontoglires</taxon>
        <taxon>Primates</taxon>
        <taxon>Haplorrhini</taxon>
        <taxon>Catarrhini</taxon>
        <taxon>Hominidae</taxon>
        <taxon>Pongo</taxon>
    </lineage>
</organism>
<feature type="chain" id="PRO_0000325864" description="DnaJ homolog subfamily C member 22">
    <location>
        <begin position="1"/>
        <end position="341"/>
    </location>
</feature>
<feature type="transmembrane region" description="Helical" evidence="1">
    <location>
        <begin position="5"/>
        <end position="25"/>
    </location>
</feature>
<feature type="transmembrane region" description="Helical" evidence="1">
    <location>
        <begin position="30"/>
        <end position="50"/>
    </location>
</feature>
<feature type="transmembrane region" description="Helical" evidence="1">
    <location>
        <begin position="81"/>
        <end position="101"/>
    </location>
</feature>
<feature type="transmembrane region" description="Helical" evidence="1">
    <location>
        <begin position="105"/>
        <end position="125"/>
    </location>
</feature>
<feature type="transmembrane region" description="Helical" evidence="1">
    <location>
        <begin position="135"/>
        <end position="155"/>
    </location>
</feature>
<feature type="transmembrane region" description="Helical" evidence="1">
    <location>
        <begin position="185"/>
        <end position="205"/>
    </location>
</feature>
<feature type="transmembrane region" description="Helical" evidence="1">
    <location>
        <begin position="218"/>
        <end position="238"/>
    </location>
</feature>
<feature type="domain" description="TM2" evidence="1">
    <location>
        <begin position="3"/>
        <end position="50"/>
    </location>
</feature>
<feature type="domain" description="J" evidence="2">
    <location>
        <begin position="277"/>
        <end position="341"/>
    </location>
</feature>